<gene>
    <name evidence="1" type="primary">ureB</name>
    <name type="ordered locus">Sca_1781</name>
</gene>
<dbReference type="EC" id="3.5.1.5" evidence="1"/>
<dbReference type="EMBL" id="AM295250">
    <property type="protein sequence ID" value="CAL28686.1"/>
    <property type="molecule type" value="Genomic_DNA"/>
</dbReference>
<dbReference type="RefSeq" id="WP_015901022.1">
    <property type="nucleotide sequence ID" value="NC_012121.1"/>
</dbReference>
<dbReference type="SMR" id="B9DLX9"/>
<dbReference type="GeneID" id="93794239"/>
<dbReference type="KEGG" id="sca:SCA_1781"/>
<dbReference type="eggNOG" id="COG0832">
    <property type="taxonomic scope" value="Bacteria"/>
</dbReference>
<dbReference type="HOGENOM" id="CLU_129707_2_2_9"/>
<dbReference type="OrthoDB" id="9797217at2"/>
<dbReference type="BioCyc" id="SCAR396513:SCA_RS09060-MONOMER"/>
<dbReference type="UniPathway" id="UPA00258">
    <property type="reaction ID" value="UER00370"/>
</dbReference>
<dbReference type="Proteomes" id="UP000000444">
    <property type="component" value="Chromosome"/>
</dbReference>
<dbReference type="GO" id="GO:0035550">
    <property type="term" value="C:urease complex"/>
    <property type="evidence" value="ECO:0007669"/>
    <property type="project" value="InterPro"/>
</dbReference>
<dbReference type="GO" id="GO:0009039">
    <property type="term" value="F:urease activity"/>
    <property type="evidence" value="ECO:0007669"/>
    <property type="project" value="UniProtKB-UniRule"/>
</dbReference>
<dbReference type="GO" id="GO:0043419">
    <property type="term" value="P:urea catabolic process"/>
    <property type="evidence" value="ECO:0007669"/>
    <property type="project" value="UniProtKB-UniRule"/>
</dbReference>
<dbReference type="CDD" id="cd00407">
    <property type="entry name" value="Urease_beta"/>
    <property type="match status" value="1"/>
</dbReference>
<dbReference type="FunFam" id="2.10.150.10:FF:000001">
    <property type="entry name" value="Urease subunit beta"/>
    <property type="match status" value="1"/>
</dbReference>
<dbReference type="Gene3D" id="2.10.150.10">
    <property type="entry name" value="Urease, beta subunit"/>
    <property type="match status" value="1"/>
</dbReference>
<dbReference type="HAMAP" id="MF_01954">
    <property type="entry name" value="Urease_beta"/>
    <property type="match status" value="1"/>
</dbReference>
<dbReference type="InterPro" id="IPR002019">
    <property type="entry name" value="Urease_beta-like"/>
</dbReference>
<dbReference type="InterPro" id="IPR036461">
    <property type="entry name" value="Urease_betasu_sf"/>
</dbReference>
<dbReference type="InterPro" id="IPR050069">
    <property type="entry name" value="Urease_subunit"/>
</dbReference>
<dbReference type="NCBIfam" id="NF009682">
    <property type="entry name" value="PRK13203.1"/>
    <property type="match status" value="1"/>
</dbReference>
<dbReference type="NCBIfam" id="TIGR00192">
    <property type="entry name" value="urease_beta"/>
    <property type="match status" value="1"/>
</dbReference>
<dbReference type="PANTHER" id="PTHR33569">
    <property type="entry name" value="UREASE"/>
    <property type="match status" value="1"/>
</dbReference>
<dbReference type="PANTHER" id="PTHR33569:SF1">
    <property type="entry name" value="UREASE"/>
    <property type="match status" value="1"/>
</dbReference>
<dbReference type="Pfam" id="PF00699">
    <property type="entry name" value="Urease_beta"/>
    <property type="match status" value="1"/>
</dbReference>
<dbReference type="SUPFAM" id="SSF51278">
    <property type="entry name" value="Urease, beta-subunit"/>
    <property type="match status" value="1"/>
</dbReference>
<name>URE2_STACT</name>
<reference key="1">
    <citation type="journal article" date="2009" name="Appl. Environ. Microbiol.">
        <title>Genome analysis of the meat starter culture bacterium Staphylococcus carnosus TM300.</title>
        <authorList>
            <person name="Rosenstein R."/>
            <person name="Nerz C."/>
            <person name="Biswas L."/>
            <person name="Resch A."/>
            <person name="Raddatz G."/>
            <person name="Schuster S.C."/>
            <person name="Goetz F."/>
        </authorList>
    </citation>
    <scope>NUCLEOTIDE SEQUENCE [LARGE SCALE GENOMIC DNA]</scope>
    <source>
        <strain>TM300</strain>
    </source>
</reference>
<accession>B9DLX9</accession>
<organism>
    <name type="scientific">Staphylococcus carnosus (strain TM300)</name>
    <dbReference type="NCBI Taxonomy" id="396513"/>
    <lineage>
        <taxon>Bacteria</taxon>
        <taxon>Bacillati</taxon>
        <taxon>Bacillota</taxon>
        <taxon>Bacilli</taxon>
        <taxon>Bacillales</taxon>
        <taxon>Staphylococcaceae</taxon>
        <taxon>Staphylococcus</taxon>
    </lineage>
</organism>
<proteinExistence type="inferred from homology"/>
<keyword id="KW-0963">Cytoplasm</keyword>
<keyword id="KW-0378">Hydrolase</keyword>
<keyword id="KW-1185">Reference proteome</keyword>
<evidence type="ECO:0000255" key="1">
    <source>
        <dbReference type="HAMAP-Rule" id="MF_01954"/>
    </source>
</evidence>
<evidence type="ECO:0000256" key="2">
    <source>
        <dbReference type="SAM" id="MobiDB-lite"/>
    </source>
</evidence>
<sequence>MKPGEIIVKKTEIEINKGTDDSETVITVKNIGDRPIQVGSHYHFFEANTGLKFDREKAYGKHLDIPAGAAVRFEPGDEKKVQLVEYNGRRRIYGFRGLVDGAIDEERVFRVENGHPNAGVKNDEGKQNANKESGDNR</sequence>
<comment type="catalytic activity">
    <reaction evidence="1">
        <text>urea + 2 H2O + H(+) = hydrogencarbonate + 2 NH4(+)</text>
        <dbReference type="Rhea" id="RHEA:20557"/>
        <dbReference type="ChEBI" id="CHEBI:15377"/>
        <dbReference type="ChEBI" id="CHEBI:15378"/>
        <dbReference type="ChEBI" id="CHEBI:16199"/>
        <dbReference type="ChEBI" id="CHEBI:17544"/>
        <dbReference type="ChEBI" id="CHEBI:28938"/>
        <dbReference type="EC" id="3.5.1.5"/>
    </reaction>
</comment>
<comment type="pathway">
    <text evidence="1">Nitrogen metabolism; urea degradation; CO(2) and NH(3) from urea (urease route): step 1/1.</text>
</comment>
<comment type="subunit">
    <text evidence="1">Heterotrimer of UreA (gamma), UreB (beta) and UreC (alpha) subunits. Three heterotrimers associate to form the active enzyme.</text>
</comment>
<comment type="subcellular location">
    <subcellularLocation>
        <location evidence="1">Cytoplasm</location>
    </subcellularLocation>
</comment>
<comment type="similarity">
    <text evidence="1">Belongs to the urease beta subunit family.</text>
</comment>
<protein>
    <recommendedName>
        <fullName evidence="1">Urease subunit beta</fullName>
        <ecNumber evidence="1">3.5.1.5</ecNumber>
    </recommendedName>
    <alternativeName>
        <fullName evidence="1">Urea amidohydrolase subunit beta</fullName>
    </alternativeName>
</protein>
<feature type="chain" id="PRO_1000188943" description="Urease subunit beta">
    <location>
        <begin position="1"/>
        <end position="137"/>
    </location>
</feature>
<feature type="region of interest" description="Disordered" evidence="2">
    <location>
        <begin position="113"/>
        <end position="137"/>
    </location>
</feature>